<sequence>MIHALNGKVESIENGKVYVNVNDLIYEIIVGDTGDFEEYINRNVKIYTKMVVNDDGISLYGFLEVIKLKLFEKLIGVNKLGPKSALKIISSNSVESVVSAIINEDVKALSSLPGIGPKTAERIVLELKDTIKELDVSINEKDRKVLEAIEALVTLGFNRNQAKKAVNKVAAKDDKLDDIIKKALRFLSR</sequence>
<proteinExistence type="inferred from homology"/>
<evidence type="ECO:0000255" key="1">
    <source>
        <dbReference type="HAMAP-Rule" id="MF_00031"/>
    </source>
</evidence>
<gene>
    <name evidence="1" type="primary">ruvA</name>
    <name type="ordered locus">THA_1166</name>
</gene>
<keyword id="KW-0963">Cytoplasm</keyword>
<keyword id="KW-0227">DNA damage</keyword>
<keyword id="KW-0233">DNA recombination</keyword>
<keyword id="KW-0234">DNA repair</keyword>
<keyword id="KW-0238">DNA-binding</keyword>
<keyword id="KW-1185">Reference proteome</keyword>
<reference key="1">
    <citation type="journal article" date="2009" name="J. Bacteriol.">
        <title>The genome of Thermosipho africanus TCF52B: lateral genetic connections to the Firmicutes and Archaea.</title>
        <authorList>
            <person name="Nesboe C.L."/>
            <person name="Bapteste E."/>
            <person name="Curtis B."/>
            <person name="Dahle H."/>
            <person name="Lopez P."/>
            <person name="Macleod D."/>
            <person name="Dlutek M."/>
            <person name="Bowman S."/>
            <person name="Zhaxybayeva O."/>
            <person name="Birkeland N.-K."/>
            <person name="Doolittle W.F."/>
        </authorList>
    </citation>
    <scope>NUCLEOTIDE SEQUENCE [LARGE SCALE GENOMIC DNA]</scope>
    <source>
        <strain>TCF52B</strain>
    </source>
</reference>
<protein>
    <recommendedName>
        <fullName evidence="1">Holliday junction branch migration complex subunit RuvA</fullName>
    </recommendedName>
</protein>
<name>RUVA_THEAB</name>
<organism>
    <name type="scientific">Thermosipho africanus (strain TCF52B)</name>
    <dbReference type="NCBI Taxonomy" id="484019"/>
    <lineage>
        <taxon>Bacteria</taxon>
        <taxon>Thermotogati</taxon>
        <taxon>Thermotogota</taxon>
        <taxon>Thermotogae</taxon>
        <taxon>Thermotogales</taxon>
        <taxon>Fervidobacteriaceae</taxon>
        <taxon>Thermosipho</taxon>
    </lineage>
</organism>
<feature type="chain" id="PRO_1000195179" description="Holliday junction branch migration complex subunit RuvA">
    <location>
        <begin position="1"/>
        <end position="189"/>
    </location>
</feature>
<feature type="region of interest" description="Domain I" evidence="1">
    <location>
        <begin position="1"/>
        <end position="63"/>
    </location>
</feature>
<feature type="region of interest" description="Domain II" evidence="1">
    <location>
        <begin position="64"/>
        <end position="135"/>
    </location>
</feature>
<feature type="region of interest" description="Flexible linker" evidence="1">
    <location>
        <begin position="135"/>
        <end position="139"/>
    </location>
</feature>
<feature type="region of interest" description="Domain III" evidence="1">
    <location>
        <begin position="140"/>
        <end position="189"/>
    </location>
</feature>
<accession>B7IHQ4</accession>
<comment type="function">
    <text evidence="1">The RuvA-RuvB-RuvC complex processes Holliday junction (HJ) DNA during genetic recombination and DNA repair, while the RuvA-RuvB complex plays an important role in the rescue of blocked DNA replication forks via replication fork reversal (RFR). RuvA specifically binds to HJ cruciform DNA, conferring on it an open structure. The RuvB hexamer acts as an ATP-dependent pump, pulling dsDNA into and through the RuvAB complex. HJ branch migration allows RuvC to scan DNA until it finds its consensus sequence, where it cleaves and resolves the cruciform DNA.</text>
</comment>
<comment type="subunit">
    <text evidence="1">Homotetramer. Forms an RuvA(8)-RuvB(12)-Holliday junction (HJ) complex. HJ DNA is sandwiched between 2 RuvA tetramers; dsDNA enters through RuvA and exits via RuvB. An RuvB hexamer assembles on each DNA strand where it exits the tetramer. Each RuvB hexamer is contacted by two RuvA subunits (via domain III) on 2 adjacent RuvB subunits; this complex drives branch migration. In the full resolvosome a probable DNA-RuvA(4)-RuvB(12)-RuvC(2) complex forms which resolves the HJ.</text>
</comment>
<comment type="subcellular location">
    <subcellularLocation>
        <location evidence="1">Cytoplasm</location>
    </subcellularLocation>
</comment>
<comment type="domain">
    <text evidence="1">Has three domains with a flexible linker between the domains II and III and assumes an 'L' shape. Domain III is highly mobile and contacts RuvB.</text>
</comment>
<comment type="similarity">
    <text evidence="1">Belongs to the RuvA family.</text>
</comment>
<dbReference type="EMBL" id="CP001185">
    <property type="protein sequence ID" value="ACJ75618.1"/>
    <property type="molecule type" value="Genomic_DNA"/>
</dbReference>
<dbReference type="RefSeq" id="WP_004101324.1">
    <property type="nucleotide sequence ID" value="NC_011653.1"/>
</dbReference>
<dbReference type="SMR" id="B7IHQ4"/>
<dbReference type="STRING" id="484019.THA_1166"/>
<dbReference type="KEGG" id="taf:THA_1166"/>
<dbReference type="eggNOG" id="COG0632">
    <property type="taxonomic scope" value="Bacteria"/>
</dbReference>
<dbReference type="HOGENOM" id="CLU_087936_3_1_0"/>
<dbReference type="OrthoDB" id="5293449at2"/>
<dbReference type="Proteomes" id="UP000002453">
    <property type="component" value="Chromosome"/>
</dbReference>
<dbReference type="GO" id="GO:0005737">
    <property type="term" value="C:cytoplasm"/>
    <property type="evidence" value="ECO:0007669"/>
    <property type="project" value="UniProtKB-SubCell"/>
</dbReference>
<dbReference type="GO" id="GO:0009379">
    <property type="term" value="C:Holliday junction helicase complex"/>
    <property type="evidence" value="ECO:0007669"/>
    <property type="project" value="InterPro"/>
</dbReference>
<dbReference type="GO" id="GO:0048476">
    <property type="term" value="C:Holliday junction resolvase complex"/>
    <property type="evidence" value="ECO:0007669"/>
    <property type="project" value="UniProtKB-UniRule"/>
</dbReference>
<dbReference type="GO" id="GO:0005524">
    <property type="term" value="F:ATP binding"/>
    <property type="evidence" value="ECO:0007669"/>
    <property type="project" value="InterPro"/>
</dbReference>
<dbReference type="GO" id="GO:0000400">
    <property type="term" value="F:four-way junction DNA binding"/>
    <property type="evidence" value="ECO:0007669"/>
    <property type="project" value="UniProtKB-UniRule"/>
</dbReference>
<dbReference type="GO" id="GO:0009378">
    <property type="term" value="F:four-way junction helicase activity"/>
    <property type="evidence" value="ECO:0007669"/>
    <property type="project" value="InterPro"/>
</dbReference>
<dbReference type="GO" id="GO:0006310">
    <property type="term" value="P:DNA recombination"/>
    <property type="evidence" value="ECO:0007669"/>
    <property type="project" value="UniProtKB-UniRule"/>
</dbReference>
<dbReference type="GO" id="GO:0006281">
    <property type="term" value="P:DNA repair"/>
    <property type="evidence" value="ECO:0007669"/>
    <property type="project" value="UniProtKB-UniRule"/>
</dbReference>
<dbReference type="CDD" id="cd14332">
    <property type="entry name" value="UBA_RuvA_C"/>
    <property type="match status" value="1"/>
</dbReference>
<dbReference type="Gene3D" id="1.10.150.20">
    <property type="entry name" value="5' to 3' exonuclease, C-terminal subdomain"/>
    <property type="match status" value="1"/>
</dbReference>
<dbReference type="Gene3D" id="1.10.8.10">
    <property type="entry name" value="DNA helicase RuvA subunit, C-terminal domain"/>
    <property type="match status" value="1"/>
</dbReference>
<dbReference type="Gene3D" id="2.40.50.140">
    <property type="entry name" value="Nucleic acid-binding proteins"/>
    <property type="match status" value="1"/>
</dbReference>
<dbReference type="HAMAP" id="MF_00031">
    <property type="entry name" value="DNA_HJ_migration_RuvA"/>
    <property type="match status" value="1"/>
</dbReference>
<dbReference type="InterPro" id="IPR013849">
    <property type="entry name" value="DNA_helicase_Holl-junc_RuvA_I"/>
</dbReference>
<dbReference type="InterPro" id="IPR003583">
    <property type="entry name" value="Hlx-hairpin-Hlx_DNA-bd_motif"/>
</dbReference>
<dbReference type="InterPro" id="IPR012340">
    <property type="entry name" value="NA-bd_OB-fold"/>
</dbReference>
<dbReference type="InterPro" id="IPR000085">
    <property type="entry name" value="RuvA"/>
</dbReference>
<dbReference type="InterPro" id="IPR010994">
    <property type="entry name" value="RuvA_2-like"/>
</dbReference>
<dbReference type="InterPro" id="IPR011114">
    <property type="entry name" value="RuvA_C"/>
</dbReference>
<dbReference type="InterPro" id="IPR036267">
    <property type="entry name" value="RuvA_C_sf"/>
</dbReference>
<dbReference type="NCBIfam" id="TIGR00084">
    <property type="entry name" value="ruvA"/>
    <property type="match status" value="1"/>
</dbReference>
<dbReference type="Pfam" id="PF14520">
    <property type="entry name" value="HHH_5"/>
    <property type="match status" value="1"/>
</dbReference>
<dbReference type="Pfam" id="PF07499">
    <property type="entry name" value="RuvA_C"/>
    <property type="match status" value="1"/>
</dbReference>
<dbReference type="Pfam" id="PF01330">
    <property type="entry name" value="RuvA_N"/>
    <property type="match status" value="1"/>
</dbReference>
<dbReference type="SMART" id="SM00278">
    <property type="entry name" value="HhH1"/>
    <property type="match status" value="2"/>
</dbReference>
<dbReference type="SUPFAM" id="SSF46929">
    <property type="entry name" value="DNA helicase RuvA subunit, C-terminal domain"/>
    <property type="match status" value="1"/>
</dbReference>
<dbReference type="SUPFAM" id="SSF50249">
    <property type="entry name" value="Nucleic acid-binding proteins"/>
    <property type="match status" value="1"/>
</dbReference>
<dbReference type="SUPFAM" id="SSF47781">
    <property type="entry name" value="RuvA domain 2-like"/>
    <property type="match status" value="1"/>
</dbReference>